<protein>
    <recommendedName>
        <fullName>Protein DEHYDRATION-INDUCED 19 homolog 7</fullName>
        <shortName>AtDi19-7</shortName>
    </recommendedName>
    <alternativeName>
        <fullName>Protein HYPERSENSITIVE TO RED AND BLUE 1</fullName>
    </alternativeName>
</protein>
<evidence type="ECO:0000250" key="1">
    <source>
        <dbReference type="UniProtKB" id="Q39083"/>
    </source>
</evidence>
<evidence type="ECO:0000256" key="2">
    <source>
        <dbReference type="SAM" id="MobiDB-lite"/>
    </source>
</evidence>
<evidence type="ECO:0000269" key="3">
    <source>
    </source>
</evidence>
<evidence type="ECO:0000269" key="4">
    <source>
    </source>
</evidence>
<evidence type="ECO:0000305" key="5"/>
<comment type="function">
    <text evidence="3">Involved in both red and blue light signaling.</text>
</comment>
<comment type="subcellular location">
    <subcellularLocation>
        <location evidence="3 4">Nucleus</location>
    </subcellularLocation>
</comment>
<comment type="tissue specificity">
    <text evidence="4">Expressed in seedlings, roots, leaves, stems, flowers and siliques.</text>
</comment>
<comment type="induction">
    <text evidence="3">Induced 3.1-fold by red light, 2.6-fold by far-red light, and 2.3-fold by blue light. Not induced by abscisic acid.</text>
</comment>
<comment type="PTM">
    <text>Not phosphorylated in vitro by CPK3 or CPK11.</text>
</comment>
<comment type="disruption phenotype">
    <text evidence="3">Plants show a hypersensitive hypocotyl growth response to both red and blue light.</text>
</comment>
<comment type="similarity">
    <text evidence="5">Belongs to the Di19 family.</text>
</comment>
<dbReference type="EMBL" id="AB016872">
    <property type="protein sequence ID" value="BAB10341.1"/>
    <property type="molecule type" value="Genomic_DNA"/>
</dbReference>
<dbReference type="EMBL" id="CP002688">
    <property type="protein sequence ID" value="AED95787.1"/>
    <property type="molecule type" value="Genomic_DNA"/>
</dbReference>
<dbReference type="EMBL" id="AF372963">
    <property type="protein sequence ID" value="AAK50100.1"/>
    <property type="molecule type" value="mRNA"/>
</dbReference>
<dbReference type="EMBL" id="AY133584">
    <property type="protein sequence ID" value="AAM91414.1"/>
    <property type="molecule type" value="mRNA"/>
</dbReference>
<dbReference type="RefSeq" id="NP_199734.2">
    <property type="nucleotide sequence ID" value="NM_124300.4"/>
</dbReference>
<dbReference type="BioGRID" id="20229">
    <property type="interactions" value="7"/>
</dbReference>
<dbReference type="FunCoup" id="Q9FJ17">
    <property type="interactions" value="249"/>
</dbReference>
<dbReference type="STRING" id="3702.Q9FJ17"/>
<dbReference type="PaxDb" id="3702-AT5G49230.1"/>
<dbReference type="ProteomicsDB" id="224117"/>
<dbReference type="DNASU" id="834983"/>
<dbReference type="EnsemblPlants" id="AT5G49230.1">
    <property type="protein sequence ID" value="AT5G49230.1"/>
    <property type="gene ID" value="AT5G49230"/>
</dbReference>
<dbReference type="GeneID" id="834983"/>
<dbReference type="Gramene" id="AT5G49230.1">
    <property type="protein sequence ID" value="AT5G49230.1"/>
    <property type="gene ID" value="AT5G49230"/>
</dbReference>
<dbReference type="KEGG" id="ath:AT5G49230"/>
<dbReference type="Araport" id="AT5G49230"/>
<dbReference type="TAIR" id="AT5G49230">
    <property type="gene designation" value="HRB1"/>
</dbReference>
<dbReference type="eggNOG" id="ENOG502QW9I">
    <property type="taxonomic scope" value="Eukaryota"/>
</dbReference>
<dbReference type="HOGENOM" id="CLU_072240_0_1_1"/>
<dbReference type="InParanoid" id="Q9FJ17"/>
<dbReference type="OMA" id="KVRRCEF"/>
<dbReference type="OrthoDB" id="6270329at2759"/>
<dbReference type="PhylomeDB" id="Q9FJ17"/>
<dbReference type="PRO" id="PR:Q9FJ17"/>
<dbReference type="Proteomes" id="UP000006548">
    <property type="component" value="Chromosome 5"/>
</dbReference>
<dbReference type="ExpressionAtlas" id="Q9FJ17">
    <property type="expression patterns" value="baseline and differential"/>
</dbReference>
<dbReference type="GO" id="GO:0005634">
    <property type="term" value="C:nucleus"/>
    <property type="evidence" value="ECO:0000314"/>
    <property type="project" value="TAIR"/>
</dbReference>
<dbReference type="GO" id="GO:0009785">
    <property type="term" value="P:blue light signaling pathway"/>
    <property type="evidence" value="ECO:0000315"/>
    <property type="project" value="TAIR"/>
</dbReference>
<dbReference type="GO" id="GO:0010161">
    <property type="term" value="P:red light signaling pathway"/>
    <property type="evidence" value="ECO:0000315"/>
    <property type="project" value="TAIR"/>
</dbReference>
<dbReference type="InterPro" id="IPR033347">
    <property type="entry name" value="DI19"/>
</dbReference>
<dbReference type="InterPro" id="IPR027935">
    <property type="entry name" value="Di19_C"/>
</dbReference>
<dbReference type="InterPro" id="IPR008598">
    <property type="entry name" value="Di19_Zn-bd"/>
</dbReference>
<dbReference type="PANTHER" id="PTHR31875">
    <property type="entry name" value="PROTEIN DEHYDRATION-INDUCED 19"/>
    <property type="match status" value="1"/>
</dbReference>
<dbReference type="PANTHER" id="PTHR31875:SF27">
    <property type="entry name" value="PROTEIN DEHYDRATION-INDUCED 19 HOMOLOG 7"/>
    <property type="match status" value="1"/>
</dbReference>
<dbReference type="Pfam" id="PF14571">
    <property type="entry name" value="Di19_C"/>
    <property type="match status" value="1"/>
</dbReference>
<dbReference type="Pfam" id="PF05605">
    <property type="entry name" value="zf-Di19"/>
    <property type="match status" value="1"/>
</dbReference>
<sequence length="211" mass="23495">MDSNSWINCPPVFSSSPSSRRYQSRSDLYLGDVEGEDDLKAEFMCPFCADEFDIVGLCCHIDVNHPVEAKNGVCPVCTKKVGLDIVGHITTQHGNVFKVQRRRRLRKGGYSSTYLTLKKELREANLQSLGGSSTFIPSSNIDSDPLLSSFMFKPPSAIPITEGDSVAQVSPKDTSKSKIQQESFSNEDQEKAKKSKFVRGLLWSTMLEDKF</sequence>
<accession>Q9FJ17</accession>
<accession>Q94JT3</accession>
<feature type="chain" id="PRO_0000304419" description="Protein DEHYDRATION-INDUCED 19 homolog 7">
    <location>
        <begin position="1"/>
        <end position="211"/>
    </location>
</feature>
<feature type="region of interest" description="Disordered" evidence="2">
    <location>
        <begin position="163"/>
        <end position="194"/>
    </location>
</feature>
<feature type="compositionally biased region" description="Polar residues" evidence="2">
    <location>
        <begin position="167"/>
        <end position="186"/>
    </location>
</feature>
<feature type="modified residue" description="Phosphothreonine" evidence="1">
    <location>
        <position position="113"/>
    </location>
</feature>
<feature type="sequence conflict" description="In Ref. 1; BAB10341." evidence="5" ref="1">
    <original>VFK</original>
    <variation>RFY</variation>
    <location>
        <begin position="96"/>
        <end position="98"/>
    </location>
</feature>
<reference key="1">
    <citation type="journal article" date="1998" name="DNA Res.">
        <title>Structural analysis of Arabidopsis thaliana chromosome 5. VIII. Sequence features of the regions of 1,081,958 bp covered by seventeen physically assigned P1 and TAC clones.</title>
        <authorList>
            <person name="Asamizu E."/>
            <person name="Sato S."/>
            <person name="Kaneko T."/>
            <person name="Nakamura Y."/>
            <person name="Kotani H."/>
            <person name="Miyajima N."/>
            <person name="Tabata S."/>
        </authorList>
    </citation>
    <scope>NUCLEOTIDE SEQUENCE [LARGE SCALE GENOMIC DNA]</scope>
    <source>
        <strain>cv. Columbia</strain>
    </source>
</reference>
<reference key="2">
    <citation type="journal article" date="2017" name="Plant J.">
        <title>Araport11: a complete reannotation of the Arabidopsis thaliana reference genome.</title>
        <authorList>
            <person name="Cheng C.Y."/>
            <person name="Krishnakumar V."/>
            <person name="Chan A.P."/>
            <person name="Thibaud-Nissen F."/>
            <person name="Schobel S."/>
            <person name="Town C.D."/>
        </authorList>
    </citation>
    <scope>GENOME REANNOTATION</scope>
    <source>
        <strain>cv. Columbia</strain>
    </source>
</reference>
<reference key="3">
    <citation type="journal article" date="2003" name="Science">
        <title>Empirical analysis of transcriptional activity in the Arabidopsis genome.</title>
        <authorList>
            <person name="Yamada K."/>
            <person name="Lim J."/>
            <person name="Dale J.M."/>
            <person name="Chen H."/>
            <person name="Shinn P."/>
            <person name="Palm C.J."/>
            <person name="Southwick A.M."/>
            <person name="Wu H.C."/>
            <person name="Kim C.J."/>
            <person name="Nguyen M."/>
            <person name="Pham P.K."/>
            <person name="Cheuk R.F."/>
            <person name="Karlin-Newmann G."/>
            <person name="Liu S.X."/>
            <person name="Lam B."/>
            <person name="Sakano H."/>
            <person name="Wu T."/>
            <person name="Yu G."/>
            <person name="Miranda M."/>
            <person name="Quach H.L."/>
            <person name="Tripp M."/>
            <person name="Chang C.H."/>
            <person name="Lee J.M."/>
            <person name="Toriumi M.J."/>
            <person name="Chan M.M."/>
            <person name="Tang C.C."/>
            <person name="Onodera C.S."/>
            <person name="Deng J.M."/>
            <person name="Akiyama K."/>
            <person name="Ansari Y."/>
            <person name="Arakawa T."/>
            <person name="Banh J."/>
            <person name="Banno F."/>
            <person name="Bowser L."/>
            <person name="Brooks S.Y."/>
            <person name="Carninci P."/>
            <person name="Chao Q."/>
            <person name="Choy N."/>
            <person name="Enju A."/>
            <person name="Goldsmith A.D."/>
            <person name="Gurjal M."/>
            <person name="Hansen N.F."/>
            <person name="Hayashizaki Y."/>
            <person name="Johnson-Hopson C."/>
            <person name="Hsuan V.W."/>
            <person name="Iida K."/>
            <person name="Karnes M."/>
            <person name="Khan S."/>
            <person name="Koesema E."/>
            <person name="Ishida J."/>
            <person name="Jiang P.X."/>
            <person name="Jones T."/>
            <person name="Kawai J."/>
            <person name="Kamiya A."/>
            <person name="Meyers C."/>
            <person name="Nakajima M."/>
            <person name="Narusaka M."/>
            <person name="Seki M."/>
            <person name="Sakurai T."/>
            <person name="Satou M."/>
            <person name="Tamse R."/>
            <person name="Vaysberg M."/>
            <person name="Wallender E.K."/>
            <person name="Wong C."/>
            <person name="Yamamura Y."/>
            <person name="Yuan S."/>
            <person name="Shinozaki K."/>
            <person name="Davis R.W."/>
            <person name="Theologis A."/>
            <person name="Ecker J.R."/>
        </authorList>
    </citation>
    <scope>NUCLEOTIDE SEQUENCE [LARGE SCALE MRNA]</scope>
    <source>
        <strain>cv. Columbia</strain>
    </source>
</reference>
<reference key="4">
    <citation type="journal article" date="2005" name="Plant Cell">
        <title>HYPERSENSITIVE TO RED AND BLUE 1, a ZZ-type zinc finger protein, regulates phytochrome B-mediated red and cryptochrome-mediated blue light responses.</title>
        <authorList>
            <person name="Kang X."/>
            <person name="Chong J."/>
            <person name="Ni M."/>
        </authorList>
    </citation>
    <scope>FUNCTION</scope>
    <scope>SUBCELLULAR LOCATION</scope>
    <scope>INDUCTION</scope>
    <scope>DISRUPTION PHENOTYPE</scope>
</reference>
<reference key="5">
    <citation type="journal article" date="2006" name="Plant Mol. Biol.">
        <title>The Arabidopsis AtDi19 gene family encodes a novel type of Cys2/His2 zinc-finger protein implicated in ABA-independent dehydration, high-salinity stress and light signaling pathways.</title>
        <authorList>
            <person name="Rodriguez Milla M.A."/>
            <person name="Townsend J."/>
            <person name="Chang I.-F."/>
            <person name="Cushman J.C."/>
        </authorList>
    </citation>
    <scope>SUBCELLULAR LOCATION</scope>
    <scope>TISSUE SPECIFICITY</scope>
    <scope>LACK OF IN VITRO PHOSPHORYLATION</scope>
    <scope>GENE FAMILY</scope>
    <scope>NOMENCLATURE</scope>
</reference>
<name>DI197_ARATH</name>
<keyword id="KW-0539">Nucleus</keyword>
<keyword id="KW-0597">Phosphoprotein</keyword>
<keyword id="KW-1185">Reference proteome</keyword>
<proteinExistence type="evidence at protein level"/>
<gene>
    <name type="primary">DI19-7</name>
    <name type="synonym">HRB1</name>
    <name type="ordered locus">At5g49230</name>
    <name type="ORF">K21P3.11</name>
</gene>
<organism>
    <name type="scientific">Arabidopsis thaliana</name>
    <name type="common">Mouse-ear cress</name>
    <dbReference type="NCBI Taxonomy" id="3702"/>
    <lineage>
        <taxon>Eukaryota</taxon>
        <taxon>Viridiplantae</taxon>
        <taxon>Streptophyta</taxon>
        <taxon>Embryophyta</taxon>
        <taxon>Tracheophyta</taxon>
        <taxon>Spermatophyta</taxon>
        <taxon>Magnoliopsida</taxon>
        <taxon>eudicotyledons</taxon>
        <taxon>Gunneridae</taxon>
        <taxon>Pentapetalae</taxon>
        <taxon>rosids</taxon>
        <taxon>malvids</taxon>
        <taxon>Brassicales</taxon>
        <taxon>Brassicaceae</taxon>
        <taxon>Camelineae</taxon>
        <taxon>Arabidopsis</taxon>
    </lineage>
</organism>